<accession>P12465</accession>
<gene>
    <name evidence="1" type="primary">rpoC2</name>
</gene>
<proteinExistence type="inferred from homology"/>
<sequence>MVKKKKFKTKNIQNPPFSSQNSSHLFFSLKKKEEKESTPEVFVIDDHFNTFKTPKALKFRTPIFFNVSFDKNTLKTVIAWFLDQYGGKATVDLVETLKQVGFHQATRAGVSLGLEDLQIPPQKASFLSAASVSGVEAAQALETGNLTSVEKSQRLIDTWNKTSESLRQAAVHNFRATNPVNPVYMMAFSGARGNISQVRQLVAMRGLMADPQGAILEFPIQSNFREGLTITEYLLSCYGARKGLVDTALRTASAGYLTRRLVDAVQHVVIYTKNCKTEKGITFKGLHIEQNLLGRVLLKDVILNTTTVIPKDTLVSSSLAKKLAAINQKIFVRSPLTCQTEKTVCQLCYGLDLAQGKLVCFGEAVGIIAAQSIGEPGTQLTMRTFHTGGVGVFSEQAMKSFPAPFDGKIEFQEALPGRFVRTPYGKIVYLLKHTGTNPKQVLLRVVSSSLTMRPLVYEILHQDVPAGSLLWVKQGEDVRTGQLLVQGSRLQKSKQKMPESTHIVRTPFSGELFFEHMPIVSLEKIITRGPRTNPKEEFSPIKVFLKDLGRFWVFSSFIQKQTFSFLDQKKGKANSFFFKGDLVSAETPLSQYNLQIPVRGHLKKLGSSVVLAQTVFKFCFSKIYYFSKFYFLVENQNLIASTTTLNFTSLTWYPFFNQFETSGYYVDLSFSSDSEVLKTTELTKVKSETYDFTKNGGFFTSHQSFVGSTTRVFLLKTFEFFSAASKQTQKTALERLPFVDSMSFSLEKIQLKKQNQKRKENPLFSLEVGKVKRNTQQRLPQFGFMVTCEENSLSRKGIFQIKKAQEKNWSHKKTFQLSFLLNPKKRKKPLKKHFMCSSLFLEKAVKRAQTTFGIQTETKLIEKKCSWFSVSKNFTDFSSQLTGIVLEPGKHMESFSFQHSYVSVNLISRENVFLVKSKTKRSQFSYVLKDLLSSSRFCHKVFEKNFSEQKMESVEKISQIFSSQTESFFSRNNQLLSFFSQKKRIKNKLFFHSQLNFPSKMPRRSDVLNSSKLLFFTREFLSDFSFYKRKELIQKRERKPHTLQNIKVKNKKFLQVIQPCFQLKKKRCLSNLFFLQKLSYQIFPERKFFYETWLNQSSFDFSLPSPFSTKQFKTTGFFSKNELQKASFDFQPSFLSQKISSSSQLTLRGSWVSMTNSFKIHFEVKTPKFFGKIEEFQQKKFFDKKLKFGIQSPSKSLSKALSFGIPIPEFSLAVSRKIIFEKAHTYIFQSFQCRQVLPKVPITQVFLKSKTVGEFQRIQLKNQKGSSSFLRAEDTVTFLLPSLVPKKQSFLKKEEKVLVSCGQRIRWGQEIFPGFASSLSGRILDITATQITVRKALPFLGSRRGLVHVAQNDLLQKNHILMTLRSKQLQTEDIVQGIPKIEQLFEARETKDGEIIRYNMHFRLNSFFSLAKRVKPFLEAFDLSLLYIQRFLVKTLLEAYSNQGVNIAEKHVEVVVRQMTARVRITFGKDTSLLPGEFIQLRLLEEINRSLVEAKKEPALYEPVILGLTKSVLQSESFLLAASFQQVSKVLVRSALATKTDFLRGLMKPLYVASLSQREQEL</sequence>
<organism>
    <name type="scientific">Chlorella vulgaris</name>
    <name type="common">Green alga</name>
    <dbReference type="NCBI Taxonomy" id="3077"/>
    <lineage>
        <taxon>Eukaryota</taxon>
        <taxon>Viridiplantae</taxon>
        <taxon>Chlorophyta</taxon>
        <taxon>core chlorophytes</taxon>
        <taxon>Trebouxiophyceae</taxon>
        <taxon>Chlorellales</taxon>
        <taxon>Chlorellaceae</taxon>
        <taxon>Chlorella clade</taxon>
        <taxon>Chlorella</taxon>
    </lineage>
</organism>
<evidence type="ECO:0000255" key="1">
    <source>
        <dbReference type="HAMAP-Rule" id="MF_01324"/>
    </source>
</evidence>
<evidence type="ECO:0000256" key="2">
    <source>
        <dbReference type="SAM" id="MobiDB-lite"/>
    </source>
</evidence>
<dbReference type="EC" id="2.7.7.6" evidence="1"/>
<dbReference type="EMBL" id="AB001684">
    <property type="protein sequence ID" value="BAA57971.1"/>
    <property type="molecule type" value="Genomic_DNA"/>
</dbReference>
<dbReference type="EMBL" id="M20655">
    <property type="protein sequence ID" value="AAA84107.1"/>
    <property type="molecule type" value="Genomic_DNA"/>
</dbReference>
<dbReference type="PIR" id="JE0011">
    <property type="entry name" value="JE0011"/>
</dbReference>
<dbReference type="PIR" id="T07323">
    <property type="entry name" value="T07323"/>
</dbReference>
<dbReference type="RefSeq" id="NP_045895.2">
    <property type="nucleotide sequence ID" value="NC_001865.1"/>
</dbReference>
<dbReference type="SMR" id="P12465"/>
<dbReference type="GeneID" id="809119"/>
<dbReference type="GO" id="GO:0009507">
    <property type="term" value="C:chloroplast"/>
    <property type="evidence" value="ECO:0007669"/>
    <property type="project" value="UniProtKB-SubCell"/>
</dbReference>
<dbReference type="GO" id="GO:0000428">
    <property type="term" value="C:DNA-directed RNA polymerase complex"/>
    <property type="evidence" value="ECO:0007669"/>
    <property type="project" value="UniProtKB-KW"/>
</dbReference>
<dbReference type="GO" id="GO:0005739">
    <property type="term" value="C:mitochondrion"/>
    <property type="evidence" value="ECO:0007669"/>
    <property type="project" value="GOC"/>
</dbReference>
<dbReference type="GO" id="GO:0003677">
    <property type="term" value="F:DNA binding"/>
    <property type="evidence" value="ECO:0007669"/>
    <property type="project" value="UniProtKB-UniRule"/>
</dbReference>
<dbReference type="GO" id="GO:0003899">
    <property type="term" value="F:DNA-directed RNA polymerase activity"/>
    <property type="evidence" value="ECO:0007669"/>
    <property type="project" value="UniProtKB-UniRule"/>
</dbReference>
<dbReference type="GO" id="GO:0008270">
    <property type="term" value="F:zinc ion binding"/>
    <property type="evidence" value="ECO:0007669"/>
    <property type="project" value="UniProtKB-UniRule"/>
</dbReference>
<dbReference type="GO" id="GO:0006351">
    <property type="term" value="P:DNA-templated transcription"/>
    <property type="evidence" value="ECO:0007669"/>
    <property type="project" value="UniProtKB-UniRule"/>
</dbReference>
<dbReference type="CDD" id="cd02655">
    <property type="entry name" value="RNAP_beta'_C"/>
    <property type="match status" value="1"/>
</dbReference>
<dbReference type="Gene3D" id="1.10.132.30">
    <property type="match status" value="1"/>
</dbReference>
<dbReference type="Gene3D" id="1.10.150.390">
    <property type="match status" value="1"/>
</dbReference>
<dbReference type="Gene3D" id="1.10.1790.20">
    <property type="match status" value="1"/>
</dbReference>
<dbReference type="Gene3D" id="1.10.274.100">
    <property type="entry name" value="RNA polymerase Rpb1, domain 3"/>
    <property type="match status" value="1"/>
</dbReference>
<dbReference type="HAMAP" id="MF_01324">
    <property type="entry name" value="RNApol_bact_RpoC2"/>
    <property type="match status" value="1"/>
</dbReference>
<dbReference type="InterPro" id="IPR012756">
    <property type="entry name" value="DNA-dir_RpoC2_beta_pp"/>
</dbReference>
<dbReference type="InterPro" id="IPR045867">
    <property type="entry name" value="DNA-dir_RpoC_beta_prime"/>
</dbReference>
<dbReference type="InterPro" id="IPR042102">
    <property type="entry name" value="RNA_pol_Rpb1_3_sf"/>
</dbReference>
<dbReference type="InterPro" id="IPR007083">
    <property type="entry name" value="RNA_pol_Rpb1_4"/>
</dbReference>
<dbReference type="InterPro" id="IPR007081">
    <property type="entry name" value="RNA_pol_Rpb1_5"/>
</dbReference>
<dbReference type="InterPro" id="IPR038120">
    <property type="entry name" value="Rpb1_funnel_sf"/>
</dbReference>
<dbReference type="NCBIfam" id="TIGR02388">
    <property type="entry name" value="rpoC2_cyan"/>
    <property type="match status" value="1"/>
</dbReference>
<dbReference type="PANTHER" id="PTHR19376">
    <property type="entry name" value="DNA-DIRECTED RNA POLYMERASE"/>
    <property type="match status" value="1"/>
</dbReference>
<dbReference type="PANTHER" id="PTHR19376:SF68">
    <property type="entry name" value="DNA-DIRECTED RNA POLYMERASE SUBUNIT BETA"/>
    <property type="match status" value="1"/>
</dbReference>
<dbReference type="Pfam" id="PF05000">
    <property type="entry name" value="RNA_pol_Rpb1_4"/>
    <property type="match status" value="1"/>
</dbReference>
<dbReference type="Pfam" id="PF04998">
    <property type="entry name" value="RNA_pol_Rpb1_5"/>
    <property type="match status" value="1"/>
</dbReference>
<dbReference type="SUPFAM" id="SSF64484">
    <property type="entry name" value="beta and beta-prime subunits of DNA dependent RNA-polymerase"/>
    <property type="match status" value="1"/>
</dbReference>
<geneLocation type="chloroplast"/>
<keyword id="KW-0150">Chloroplast</keyword>
<keyword id="KW-0240">DNA-directed RNA polymerase</keyword>
<keyword id="KW-0479">Metal-binding</keyword>
<keyword id="KW-0548">Nucleotidyltransferase</keyword>
<keyword id="KW-0934">Plastid</keyword>
<keyword id="KW-0804">Transcription</keyword>
<keyword id="KW-0808">Transferase</keyword>
<keyword id="KW-0862">Zinc</keyword>
<comment type="function">
    <text evidence="1">DNA-dependent RNA polymerase catalyzes the transcription of DNA into RNA using the four ribonucleoside triphosphates as substrates.</text>
</comment>
<comment type="catalytic activity">
    <reaction evidence="1">
        <text>RNA(n) + a ribonucleoside 5'-triphosphate = RNA(n+1) + diphosphate</text>
        <dbReference type="Rhea" id="RHEA:21248"/>
        <dbReference type="Rhea" id="RHEA-COMP:14527"/>
        <dbReference type="Rhea" id="RHEA-COMP:17342"/>
        <dbReference type="ChEBI" id="CHEBI:33019"/>
        <dbReference type="ChEBI" id="CHEBI:61557"/>
        <dbReference type="ChEBI" id="CHEBI:140395"/>
        <dbReference type="EC" id="2.7.7.6"/>
    </reaction>
</comment>
<comment type="cofactor">
    <cofactor evidence="1">
        <name>Zn(2+)</name>
        <dbReference type="ChEBI" id="CHEBI:29105"/>
    </cofactor>
    <text evidence="1">Binds 1 Zn(2+) ion per subunit.</text>
</comment>
<comment type="subunit">
    <text evidence="1">In plastids the minimal PEP RNA polymerase catalytic core is composed of four subunits: alpha, beta, beta', and beta''. When a (nuclear-encoded) sigma factor is associated with the core the holoenzyme is formed, which can initiate transcription.</text>
</comment>
<comment type="subcellular location">
    <subcellularLocation>
        <location evidence="1">Plastid</location>
        <location evidence="1">Chloroplast</location>
    </subcellularLocation>
</comment>
<comment type="similarity">
    <text evidence="1">Belongs to the RNA polymerase beta' chain family. RpoC2 subfamily.</text>
</comment>
<feature type="chain" id="PRO_0000067920" description="DNA-directed RNA polymerase subunit beta''">
    <location>
        <begin position="1"/>
        <end position="1562"/>
    </location>
</feature>
<feature type="region of interest" description="Disordered" evidence="2">
    <location>
        <begin position="1"/>
        <end position="22"/>
    </location>
</feature>
<feature type="compositionally biased region" description="Polar residues" evidence="2">
    <location>
        <begin position="11"/>
        <end position="22"/>
    </location>
</feature>
<feature type="binding site" evidence="1">
    <location>
        <position position="275"/>
    </location>
    <ligand>
        <name>Zn(2+)</name>
        <dbReference type="ChEBI" id="CHEBI:29105"/>
    </ligand>
</feature>
<feature type="binding site" evidence="1">
    <location>
        <position position="338"/>
    </location>
    <ligand>
        <name>Zn(2+)</name>
        <dbReference type="ChEBI" id="CHEBI:29105"/>
    </ligand>
</feature>
<feature type="binding site" evidence="1">
    <location>
        <position position="345"/>
    </location>
    <ligand>
        <name>Zn(2+)</name>
        <dbReference type="ChEBI" id="CHEBI:29105"/>
    </ligand>
</feature>
<feature type="binding site" evidence="1">
    <location>
        <position position="348"/>
    </location>
    <ligand>
        <name>Zn(2+)</name>
        <dbReference type="ChEBI" id="CHEBI:29105"/>
    </ligand>
</feature>
<reference key="1">
    <citation type="journal article" date="1997" name="Proc. Natl. Acad. Sci. U.S.A.">
        <title>Complete nucleotide sequence of the chloroplast genome from the green alga Chlorella vulgaris: the existence of genes possibly involved in chloroplast division.</title>
        <authorList>
            <person name="Wakasugi T."/>
            <person name="Nagai T."/>
            <person name="Kapoor M."/>
            <person name="Sugita M."/>
            <person name="Ito M."/>
            <person name="Ito S."/>
            <person name="Tsudzuki J."/>
            <person name="Nakashima K."/>
            <person name="Tsudzuki T."/>
            <person name="Suzuki Y."/>
            <person name="Hamada A."/>
            <person name="Ohta T."/>
            <person name="Inamura A."/>
            <person name="Yoshinaga K."/>
            <person name="Sugiura M."/>
        </authorList>
    </citation>
    <scope>NUCLEOTIDE SEQUENCE [LARGE SCALE GENOMIC DNA]</scope>
    <source>
        <strain>IAM C-27 / Tamiya</strain>
    </source>
</reference>
<reference key="2">
    <citation type="journal article" date="1988" name="Plant Mol. Biol.">
        <title>Chlorella chloroplast DNA sequence containing a gene for the large subunit of ribulose-1, 5-bisphosphate carboxylase and a part of a possible gene for the beta' subunit of RNA polymerase.</title>
        <authorList>
            <person name="Yoshinaga K."/>
            <person name="Ohta T."/>
            <person name="Suzuki Y."/>
            <person name="Sugiura M."/>
        </authorList>
        <dbReference type="AGRICOLA" id="IND92000630"/>
    </citation>
    <scope>NUCLEOTIDE SEQUENCE [GENOMIC DNA] OF 1323-1562</scope>
    <source>
        <strain>IAM C-27 / Tamiya</strain>
    </source>
</reference>
<protein>
    <recommendedName>
        <fullName evidence="1">DNA-directed RNA polymerase subunit beta''</fullName>
        <ecNumber evidence="1">2.7.7.6</ecNumber>
    </recommendedName>
    <alternativeName>
        <fullName evidence="1">PEP</fullName>
    </alternativeName>
    <alternativeName>
        <fullName evidence="1">Plastid-encoded RNA polymerase subunit beta''</fullName>
        <shortName evidence="1">RNA polymerase subunit beta''</shortName>
    </alternativeName>
</protein>
<name>RPOC2_CHLVU</name>